<protein>
    <recommendedName>
        <fullName evidence="1">Guanylate kinase</fullName>
        <ecNumber evidence="1">2.7.4.8</ecNumber>
    </recommendedName>
    <alternativeName>
        <fullName evidence="1">GMP kinase</fullName>
    </alternativeName>
</protein>
<gene>
    <name evidence="1" type="primary">gmk</name>
    <name type="ordered locus">Ldb1415</name>
</gene>
<name>KGUA_LACDA</name>
<keyword id="KW-0067">ATP-binding</keyword>
<keyword id="KW-0963">Cytoplasm</keyword>
<keyword id="KW-0418">Kinase</keyword>
<keyword id="KW-0547">Nucleotide-binding</keyword>
<keyword id="KW-1185">Reference proteome</keyword>
<keyword id="KW-0808">Transferase</keyword>
<feature type="chain" id="PRO_0000266339" description="Guanylate kinase">
    <location>
        <begin position="1"/>
        <end position="204"/>
    </location>
</feature>
<feature type="domain" description="Guanylate kinase-like" evidence="1">
    <location>
        <begin position="5"/>
        <end position="184"/>
    </location>
</feature>
<feature type="binding site" evidence="1">
    <location>
        <begin position="12"/>
        <end position="19"/>
    </location>
    <ligand>
        <name>ATP</name>
        <dbReference type="ChEBI" id="CHEBI:30616"/>
    </ligand>
</feature>
<reference key="1">
    <citation type="journal article" date="2006" name="Proc. Natl. Acad. Sci. U.S.A.">
        <title>The complete genome sequence of Lactobacillus bulgaricus reveals extensive and ongoing reductive evolution.</title>
        <authorList>
            <person name="van de Guchte M."/>
            <person name="Penaud S."/>
            <person name="Grimaldi C."/>
            <person name="Barbe V."/>
            <person name="Bryson K."/>
            <person name="Nicolas P."/>
            <person name="Robert C."/>
            <person name="Oztas S."/>
            <person name="Mangenot S."/>
            <person name="Couloux A."/>
            <person name="Loux V."/>
            <person name="Dervyn R."/>
            <person name="Bossy R."/>
            <person name="Bolotin A."/>
            <person name="Batto J.-M."/>
            <person name="Walunas T."/>
            <person name="Gibrat J.-F."/>
            <person name="Bessieres P."/>
            <person name="Weissenbach J."/>
            <person name="Ehrlich S.D."/>
            <person name="Maguin E."/>
        </authorList>
    </citation>
    <scope>NUCLEOTIDE SEQUENCE [LARGE SCALE GENOMIC DNA]</scope>
    <source>
        <strain>ATCC 11842 / DSM 20081 / BCRC 10696 / JCM 1002 / NBRC 13953 / NCIMB 11778 / NCTC 12712 / WDCM 00102 / Lb 14</strain>
    </source>
</reference>
<accession>Q1G9H8</accession>
<dbReference type="EC" id="2.7.4.8" evidence="1"/>
<dbReference type="EMBL" id="CR954253">
    <property type="protein sequence ID" value="CAI98216.1"/>
    <property type="molecule type" value="Genomic_DNA"/>
</dbReference>
<dbReference type="RefSeq" id="WP_011544043.1">
    <property type="nucleotide sequence ID" value="NC_008054.1"/>
</dbReference>
<dbReference type="SMR" id="Q1G9H8"/>
<dbReference type="STRING" id="390333.Ldb1415"/>
<dbReference type="KEGG" id="ldb:Ldb1415"/>
<dbReference type="PATRIC" id="fig|390333.13.peg.1953"/>
<dbReference type="eggNOG" id="COG0194">
    <property type="taxonomic scope" value="Bacteria"/>
</dbReference>
<dbReference type="HOGENOM" id="CLU_001715_1_0_9"/>
<dbReference type="BioCyc" id="LDEL390333:LDB_RS06075-MONOMER"/>
<dbReference type="Proteomes" id="UP000001259">
    <property type="component" value="Chromosome"/>
</dbReference>
<dbReference type="GO" id="GO:0005829">
    <property type="term" value="C:cytosol"/>
    <property type="evidence" value="ECO:0007669"/>
    <property type="project" value="TreeGrafter"/>
</dbReference>
<dbReference type="GO" id="GO:0005524">
    <property type="term" value="F:ATP binding"/>
    <property type="evidence" value="ECO:0007669"/>
    <property type="project" value="UniProtKB-UniRule"/>
</dbReference>
<dbReference type="GO" id="GO:0004385">
    <property type="term" value="F:guanylate kinase activity"/>
    <property type="evidence" value="ECO:0007669"/>
    <property type="project" value="UniProtKB-UniRule"/>
</dbReference>
<dbReference type="CDD" id="cd00071">
    <property type="entry name" value="GMPK"/>
    <property type="match status" value="1"/>
</dbReference>
<dbReference type="FunFam" id="3.40.50.300:FF:000855">
    <property type="entry name" value="Guanylate kinase"/>
    <property type="match status" value="1"/>
</dbReference>
<dbReference type="FunFam" id="3.30.63.10:FF:000002">
    <property type="entry name" value="Guanylate kinase 1"/>
    <property type="match status" value="1"/>
</dbReference>
<dbReference type="Gene3D" id="3.30.63.10">
    <property type="entry name" value="Guanylate Kinase phosphate binding domain"/>
    <property type="match status" value="1"/>
</dbReference>
<dbReference type="Gene3D" id="3.40.50.300">
    <property type="entry name" value="P-loop containing nucleotide triphosphate hydrolases"/>
    <property type="match status" value="1"/>
</dbReference>
<dbReference type="HAMAP" id="MF_00328">
    <property type="entry name" value="Guanylate_kinase"/>
    <property type="match status" value="1"/>
</dbReference>
<dbReference type="InterPro" id="IPR008145">
    <property type="entry name" value="GK/Ca_channel_bsu"/>
</dbReference>
<dbReference type="InterPro" id="IPR008144">
    <property type="entry name" value="Guanylate_kin-like_dom"/>
</dbReference>
<dbReference type="InterPro" id="IPR017665">
    <property type="entry name" value="Guanylate_kinase"/>
</dbReference>
<dbReference type="InterPro" id="IPR020590">
    <property type="entry name" value="Guanylate_kinase_CS"/>
</dbReference>
<dbReference type="InterPro" id="IPR027417">
    <property type="entry name" value="P-loop_NTPase"/>
</dbReference>
<dbReference type="NCBIfam" id="TIGR03263">
    <property type="entry name" value="guanyl_kin"/>
    <property type="match status" value="1"/>
</dbReference>
<dbReference type="PANTHER" id="PTHR23117:SF13">
    <property type="entry name" value="GUANYLATE KINASE"/>
    <property type="match status" value="1"/>
</dbReference>
<dbReference type="PANTHER" id="PTHR23117">
    <property type="entry name" value="GUANYLATE KINASE-RELATED"/>
    <property type="match status" value="1"/>
</dbReference>
<dbReference type="Pfam" id="PF00625">
    <property type="entry name" value="Guanylate_kin"/>
    <property type="match status" value="1"/>
</dbReference>
<dbReference type="SMART" id="SM00072">
    <property type="entry name" value="GuKc"/>
    <property type="match status" value="1"/>
</dbReference>
<dbReference type="SUPFAM" id="SSF52540">
    <property type="entry name" value="P-loop containing nucleoside triphosphate hydrolases"/>
    <property type="match status" value="1"/>
</dbReference>
<dbReference type="PROSITE" id="PS00856">
    <property type="entry name" value="GUANYLATE_KINASE_1"/>
    <property type="match status" value="1"/>
</dbReference>
<dbReference type="PROSITE" id="PS50052">
    <property type="entry name" value="GUANYLATE_KINASE_2"/>
    <property type="match status" value="1"/>
</dbReference>
<comment type="function">
    <text evidence="1">Essential for recycling GMP and indirectly, cGMP.</text>
</comment>
<comment type="catalytic activity">
    <reaction evidence="1">
        <text>GMP + ATP = GDP + ADP</text>
        <dbReference type="Rhea" id="RHEA:20780"/>
        <dbReference type="ChEBI" id="CHEBI:30616"/>
        <dbReference type="ChEBI" id="CHEBI:58115"/>
        <dbReference type="ChEBI" id="CHEBI:58189"/>
        <dbReference type="ChEBI" id="CHEBI:456216"/>
        <dbReference type="EC" id="2.7.4.8"/>
    </reaction>
</comment>
<comment type="subcellular location">
    <subcellularLocation>
        <location evidence="1">Cytoplasm</location>
    </subcellularLocation>
</comment>
<comment type="similarity">
    <text evidence="1">Belongs to the guanylate kinase family.</text>
</comment>
<sequence>MADKGLLLVLSGPSGVGKGTVKSAIVEHKVFPFEYSVSMTTRKPREGEVNGKDYYFVTREEFKQAIADNQLLEYNEYVGNLYGTPLGPVKEMLAAGKDVLLEIDVNGARTVRQQMPEGVFIFLTPPDLHTLRDRLEHRGTESEDVIRGRIAQARKEILVMQDYDYAVVNDTVANAVNHIKAIVDAEHVSVRRVIDDYRKMVKED</sequence>
<evidence type="ECO:0000255" key="1">
    <source>
        <dbReference type="HAMAP-Rule" id="MF_00328"/>
    </source>
</evidence>
<organism>
    <name type="scientific">Lactobacillus delbrueckii subsp. bulgaricus (strain ATCC 11842 / DSM 20081 / BCRC 10696 / JCM 1002 / NBRC 13953 / NCIMB 11778 / NCTC 12712 / WDCM 00102 / Lb 14)</name>
    <dbReference type="NCBI Taxonomy" id="390333"/>
    <lineage>
        <taxon>Bacteria</taxon>
        <taxon>Bacillati</taxon>
        <taxon>Bacillota</taxon>
        <taxon>Bacilli</taxon>
        <taxon>Lactobacillales</taxon>
        <taxon>Lactobacillaceae</taxon>
        <taxon>Lactobacillus</taxon>
    </lineage>
</organism>
<proteinExistence type="inferred from homology"/>